<keyword id="KW-0025">Alternative splicing</keyword>
<keyword id="KW-1185">Reference proteome</keyword>
<gene>
    <name evidence="5" type="primary">Fhip2a</name>
    <name evidence="5" type="synonym">Fam160b1</name>
    <name type="synonym">Kiaa1600</name>
</gene>
<organism>
    <name type="scientific">Mus musculus</name>
    <name type="common">Mouse</name>
    <dbReference type="NCBI Taxonomy" id="10090"/>
    <lineage>
        <taxon>Eukaryota</taxon>
        <taxon>Metazoa</taxon>
        <taxon>Chordata</taxon>
        <taxon>Craniata</taxon>
        <taxon>Vertebrata</taxon>
        <taxon>Euteleostomi</taxon>
        <taxon>Mammalia</taxon>
        <taxon>Eutheria</taxon>
        <taxon>Euarchontoglires</taxon>
        <taxon>Glires</taxon>
        <taxon>Rodentia</taxon>
        <taxon>Myomorpha</taxon>
        <taxon>Muroidea</taxon>
        <taxon>Muridae</taxon>
        <taxon>Murinae</taxon>
        <taxon>Mus</taxon>
        <taxon>Mus</taxon>
    </lineage>
</organism>
<sequence>MFSKLTSILQHAVEALAPSLPLQEDFVYHWKAITHYYIETSDDKAPVTDTNIPSHLEQMLDILVQEENERESGETGPCMEYLLHHKILETLYTLGKADCPPGMKQQVLVFYTKLLGRIRQPLLPHINVHRPVQKLIRLCGEVLATPTENEEIQFLCIVCAKLKQDPYLVNFFLENKSKSLVSRGALSVISEDGPKGQDPGSGDVSQCQQPQELSGATGVEPTESEEEPPHQMDDLSASLDDLNVTSLPEASAVRPNQDYNLVNSLLNLTRSPDGRIAVKACEGLMLLVSLPEPAAAKCLAQSTCLCELLTGRLTSLYKALPQSVDPLDIETVEAVNWGLDSYSHKEDASAFPGKRALISFLSWFDYCDQLIKEAQKTAAVALAKAIHERFFVGVMEPQLMQTSEMGILTSTALLHRIVRQVTSDVLLQEMVVFILGEQREPETLSEISRHPLRHRLIEHCDHISDEISIMTLRMFEHLLQKPNEHILYNLVLRNLEERNYTENKPSCPEDKDVVENGLIAGAVDLEEDPLFTDISPDNTLPNQEWICSPRTSPDHPKNDGKTEVHKVVNSFLCLVPDDAKSSYHVEGTGYDTYLRDAHRQFRDYCAICSRWEWPGAPKPLEKCDLEAAFFEGHFLKVLFDRMGRILDQPYDVNLQVTSVLSRLSLFPHPHTHEYLLDPYINLASGCRSLFSVIVRVVGDLMVRIQRIQDFTPKLLLVRKRLLGLEPEGPIVDHITLLEGVIVLEEFCKELAAIAFVKYHASATP</sequence>
<feature type="chain" id="PRO_0000284649" description="FHF complex subunit HOOK interacting protein 2A">
    <location>
        <begin position="1"/>
        <end position="764"/>
    </location>
</feature>
<feature type="region of interest" description="Disordered" evidence="2">
    <location>
        <begin position="190"/>
        <end position="236"/>
    </location>
</feature>
<feature type="compositionally biased region" description="Polar residues" evidence="2">
    <location>
        <begin position="203"/>
        <end position="214"/>
    </location>
</feature>
<feature type="splice variant" id="VSP_024592" description="In isoform 2." evidence="3">
    <location>
        <begin position="524"/>
        <end position="764"/>
    </location>
</feature>
<feature type="sequence conflict" description="In Ref. 1; BAC32767." evidence="4" ref="1">
    <original>G</original>
    <variation>R</variation>
    <location>
        <position position="95"/>
    </location>
</feature>
<feature type="sequence conflict" description="In Ref. 1; BAE42971." evidence="4" ref="1">
    <original>H</original>
    <variation>Y</variation>
    <location>
        <position position="477"/>
    </location>
</feature>
<feature type="sequence conflict" description="In Ref. 1; BAC32767." evidence="4" ref="1">
    <original>L</original>
    <variation>S</variation>
    <location>
        <position position="492"/>
    </location>
</feature>
<feature type="sequence conflict" description="In Ref. 1; BAC26638." evidence="4" ref="1">
    <original>L</original>
    <variation>Q</variation>
    <location>
        <position position="518"/>
    </location>
</feature>
<feature type="sequence conflict" description="In Ref. 1; BAE42971." evidence="4" ref="1">
    <original>S</original>
    <variation>T</variation>
    <location>
        <position position="548"/>
    </location>
</feature>
<feature type="sequence conflict" description="In Ref. 1; BAE42971." evidence="4" ref="1">
    <original>D</original>
    <variation>E</variation>
    <location>
        <position position="578"/>
    </location>
</feature>
<feature type="sequence conflict" description="In Ref. 1; BAE42971." evidence="4" ref="1">
    <original>I</original>
    <variation>V</variation>
    <location>
        <position position="607"/>
    </location>
</feature>
<feature type="sequence conflict" description="In Ref. 1; BAE42971." evidence="4" ref="1">
    <original>I</original>
    <variation>V</variation>
    <location>
        <position position="680"/>
    </location>
</feature>
<name>FHI2A_MOUSE</name>
<dbReference type="EMBL" id="AK029835">
    <property type="protein sequence ID" value="BAC26638.1"/>
    <property type="molecule type" value="mRNA"/>
</dbReference>
<dbReference type="EMBL" id="AK046518">
    <property type="protein sequence ID" value="BAC32767.1"/>
    <property type="status" value="ALT_FRAME"/>
    <property type="molecule type" value="mRNA"/>
</dbReference>
<dbReference type="EMBL" id="AK172373">
    <property type="protein sequence ID" value="BAE42971.1"/>
    <property type="molecule type" value="mRNA"/>
</dbReference>
<dbReference type="EMBL" id="BC023048">
    <property type="protein sequence ID" value="AAH23048.1"/>
    <property type="molecule type" value="mRNA"/>
</dbReference>
<dbReference type="EMBL" id="BC062949">
    <property type="protein sequence ID" value="AAH62949.1"/>
    <property type="molecule type" value="mRNA"/>
</dbReference>
<dbReference type="EMBL" id="BC079562">
    <property type="status" value="NOT_ANNOTATED_CDS"/>
    <property type="molecule type" value="mRNA"/>
</dbReference>
<dbReference type="EMBL" id="AK122530">
    <property type="protein sequence ID" value="BAC65812.1"/>
    <property type="molecule type" value="mRNA"/>
</dbReference>
<dbReference type="CCDS" id="CCDS29925.1">
    <molecule id="Q8CDM8-1"/>
</dbReference>
<dbReference type="RefSeq" id="NP_663480.3">
    <molecule id="Q8CDM8-1"/>
    <property type="nucleotide sequence ID" value="NM_145505.4"/>
</dbReference>
<dbReference type="SMR" id="Q8CDM8"/>
<dbReference type="BioGRID" id="230493">
    <property type="interactions" value="1"/>
</dbReference>
<dbReference type="FunCoup" id="Q8CDM8">
    <property type="interactions" value="335"/>
</dbReference>
<dbReference type="STRING" id="10090.ENSMUSP00000048903"/>
<dbReference type="GlyGen" id="Q8CDM8">
    <property type="glycosylation" value="3 sites, 1 O-linked glycan (2 sites)"/>
</dbReference>
<dbReference type="iPTMnet" id="Q8CDM8"/>
<dbReference type="PhosphoSitePlus" id="Q8CDM8"/>
<dbReference type="SwissPalm" id="Q8CDM8"/>
<dbReference type="PaxDb" id="10090-ENSMUSP00000048903"/>
<dbReference type="PeptideAtlas" id="Q8CDM8"/>
<dbReference type="ProteomicsDB" id="271529">
    <molecule id="Q8CDM8-1"/>
</dbReference>
<dbReference type="ProteomicsDB" id="271530">
    <molecule id="Q8CDM8-2"/>
</dbReference>
<dbReference type="Pumba" id="Q8CDM8"/>
<dbReference type="Antibodypedia" id="52360">
    <property type="antibodies" value="111 antibodies from 19 providers"/>
</dbReference>
<dbReference type="DNASU" id="226252"/>
<dbReference type="Ensembl" id="ENSMUST00000036407.6">
    <molecule id="Q8CDM8-1"/>
    <property type="protein sequence ID" value="ENSMUSP00000048903.5"/>
    <property type="gene ID" value="ENSMUSG00000033478.7"/>
</dbReference>
<dbReference type="GeneID" id="226252"/>
<dbReference type="KEGG" id="mmu:226252"/>
<dbReference type="UCSC" id="uc008iac.2">
    <molecule id="Q8CDM8-1"/>
    <property type="organism name" value="mouse"/>
</dbReference>
<dbReference type="AGR" id="MGI:2147545"/>
<dbReference type="CTD" id="57700"/>
<dbReference type="MGI" id="MGI:2147545">
    <property type="gene designation" value="Fhip2a"/>
</dbReference>
<dbReference type="VEuPathDB" id="HostDB:ENSMUSG00000033478"/>
<dbReference type="eggNOG" id="KOG3695">
    <property type="taxonomic scope" value="Eukaryota"/>
</dbReference>
<dbReference type="GeneTree" id="ENSGT00950000182936"/>
<dbReference type="HOGENOM" id="CLU_023718_0_0_1"/>
<dbReference type="InParanoid" id="Q8CDM8"/>
<dbReference type="OMA" id="VQTEFFF"/>
<dbReference type="OrthoDB" id="5350595at2759"/>
<dbReference type="PhylomeDB" id="Q8CDM8"/>
<dbReference type="TreeFam" id="TF313941"/>
<dbReference type="BioGRID-ORCS" id="226252">
    <property type="hits" value="0 hits in 77 CRISPR screens"/>
</dbReference>
<dbReference type="ChiTaRS" id="Fam160b1">
    <property type="organism name" value="mouse"/>
</dbReference>
<dbReference type="PRO" id="PR:Q8CDM8"/>
<dbReference type="Proteomes" id="UP000000589">
    <property type="component" value="Chromosome 19"/>
</dbReference>
<dbReference type="RNAct" id="Q8CDM8">
    <property type="molecule type" value="protein"/>
</dbReference>
<dbReference type="Bgee" id="ENSMUSG00000033478">
    <property type="expression patterns" value="Expressed in humerus cartilage element and 241 other cell types or tissues"/>
</dbReference>
<dbReference type="ExpressionAtlas" id="Q8CDM8">
    <property type="expression patterns" value="baseline and differential"/>
</dbReference>
<dbReference type="InterPro" id="IPR019384">
    <property type="entry name" value="FHIP"/>
</dbReference>
<dbReference type="InterPro" id="IPR045669">
    <property type="entry name" value="FHIP_C"/>
</dbReference>
<dbReference type="InterPro" id="IPR045668">
    <property type="entry name" value="FHIP_KELAA_motif"/>
</dbReference>
<dbReference type="PANTHER" id="PTHR21705:SF10">
    <property type="entry name" value="FHF COMPLEX SUBUNIT HOOK INTERACTING PROTEIN 2A"/>
    <property type="match status" value="1"/>
</dbReference>
<dbReference type="PANTHER" id="PTHR21705">
    <property type="entry name" value="RAI16 PROTEIN-RELATED"/>
    <property type="match status" value="1"/>
</dbReference>
<dbReference type="Pfam" id="PF19314">
    <property type="entry name" value="DUF5917"/>
    <property type="match status" value="1"/>
</dbReference>
<dbReference type="Pfam" id="PF19311">
    <property type="entry name" value="KELAA"/>
    <property type="match status" value="1"/>
</dbReference>
<dbReference type="Pfam" id="PF10257">
    <property type="entry name" value="RAI16-like"/>
    <property type="match status" value="1"/>
</dbReference>
<protein>
    <recommendedName>
        <fullName evidence="5">FHF complex subunit HOOK interacting protein 2A</fullName>
    </recommendedName>
</protein>
<evidence type="ECO:0000250" key="1">
    <source>
        <dbReference type="UniProtKB" id="Q5W0V3"/>
    </source>
</evidence>
<evidence type="ECO:0000256" key="2">
    <source>
        <dbReference type="SAM" id="MobiDB-lite"/>
    </source>
</evidence>
<evidence type="ECO:0000303" key="3">
    <source>
    </source>
</evidence>
<evidence type="ECO:0000305" key="4"/>
<evidence type="ECO:0000312" key="5">
    <source>
        <dbReference type="MGI" id="MGI:2147545"/>
    </source>
</evidence>
<accession>Q8CDM8</accession>
<accession>Q3T9P9</accession>
<accession>Q68FM8</accession>
<accession>Q6P5D5</accession>
<accession>Q80TB5</accession>
<accession>Q8C8M2</accession>
<accession>Q8R1V3</accession>
<proteinExistence type="evidence at protein level"/>
<comment type="function">
    <text evidence="1">May be required for proper functioning of the nervous system.</text>
</comment>
<comment type="alternative products">
    <event type="alternative splicing"/>
    <isoform>
        <id>Q8CDM8-1</id>
        <name>1</name>
        <sequence type="displayed"/>
    </isoform>
    <isoform>
        <id>Q8CDM8-2</id>
        <name>2</name>
        <sequence type="described" ref="VSP_024592"/>
    </isoform>
</comment>
<comment type="similarity">
    <text evidence="4">Belongs to the FHIP family.</text>
</comment>
<comment type="sequence caution" evidence="4">
    <conflict type="frameshift">
        <sequence resource="EMBL-CDS" id="BAC32767"/>
    </conflict>
</comment>
<comment type="sequence caution" evidence="4">
    <conflict type="frameshift">
        <sequence resource="EMBL" id="BC079562"/>
    </conflict>
</comment>
<reference key="1">
    <citation type="journal article" date="2005" name="Science">
        <title>The transcriptional landscape of the mammalian genome.</title>
        <authorList>
            <person name="Carninci P."/>
            <person name="Kasukawa T."/>
            <person name="Katayama S."/>
            <person name="Gough J."/>
            <person name="Frith M.C."/>
            <person name="Maeda N."/>
            <person name="Oyama R."/>
            <person name="Ravasi T."/>
            <person name="Lenhard B."/>
            <person name="Wells C."/>
            <person name="Kodzius R."/>
            <person name="Shimokawa K."/>
            <person name="Bajic V.B."/>
            <person name="Brenner S.E."/>
            <person name="Batalov S."/>
            <person name="Forrest A.R."/>
            <person name="Zavolan M."/>
            <person name="Davis M.J."/>
            <person name="Wilming L.G."/>
            <person name="Aidinis V."/>
            <person name="Allen J.E."/>
            <person name="Ambesi-Impiombato A."/>
            <person name="Apweiler R."/>
            <person name="Aturaliya R.N."/>
            <person name="Bailey T.L."/>
            <person name="Bansal M."/>
            <person name="Baxter L."/>
            <person name="Beisel K.W."/>
            <person name="Bersano T."/>
            <person name="Bono H."/>
            <person name="Chalk A.M."/>
            <person name="Chiu K.P."/>
            <person name="Choudhary V."/>
            <person name="Christoffels A."/>
            <person name="Clutterbuck D.R."/>
            <person name="Crowe M.L."/>
            <person name="Dalla E."/>
            <person name="Dalrymple B.P."/>
            <person name="de Bono B."/>
            <person name="Della Gatta G."/>
            <person name="di Bernardo D."/>
            <person name="Down T."/>
            <person name="Engstrom P."/>
            <person name="Fagiolini M."/>
            <person name="Faulkner G."/>
            <person name="Fletcher C.F."/>
            <person name="Fukushima T."/>
            <person name="Furuno M."/>
            <person name="Futaki S."/>
            <person name="Gariboldi M."/>
            <person name="Georgii-Hemming P."/>
            <person name="Gingeras T.R."/>
            <person name="Gojobori T."/>
            <person name="Green R.E."/>
            <person name="Gustincich S."/>
            <person name="Harbers M."/>
            <person name="Hayashi Y."/>
            <person name="Hensch T.K."/>
            <person name="Hirokawa N."/>
            <person name="Hill D."/>
            <person name="Huminiecki L."/>
            <person name="Iacono M."/>
            <person name="Ikeo K."/>
            <person name="Iwama A."/>
            <person name="Ishikawa T."/>
            <person name="Jakt M."/>
            <person name="Kanapin A."/>
            <person name="Katoh M."/>
            <person name="Kawasawa Y."/>
            <person name="Kelso J."/>
            <person name="Kitamura H."/>
            <person name="Kitano H."/>
            <person name="Kollias G."/>
            <person name="Krishnan S.P."/>
            <person name="Kruger A."/>
            <person name="Kummerfeld S.K."/>
            <person name="Kurochkin I.V."/>
            <person name="Lareau L.F."/>
            <person name="Lazarevic D."/>
            <person name="Lipovich L."/>
            <person name="Liu J."/>
            <person name="Liuni S."/>
            <person name="McWilliam S."/>
            <person name="Madan Babu M."/>
            <person name="Madera M."/>
            <person name="Marchionni L."/>
            <person name="Matsuda H."/>
            <person name="Matsuzawa S."/>
            <person name="Miki H."/>
            <person name="Mignone F."/>
            <person name="Miyake S."/>
            <person name="Morris K."/>
            <person name="Mottagui-Tabar S."/>
            <person name="Mulder N."/>
            <person name="Nakano N."/>
            <person name="Nakauchi H."/>
            <person name="Ng P."/>
            <person name="Nilsson R."/>
            <person name="Nishiguchi S."/>
            <person name="Nishikawa S."/>
            <person name="Nori F."/>
            <person name="Ohara O."/>
            <person name="Okazaki Y."/>
            <person name="Orlando V."/>
            <person name="Pang K.C."/>
            <person name="Pavan W.J."/>
            <person name="Pavesi G."/>
            <person name="Pesole G."/>
            <person name="Petrovsky N."/>
            <person name="Piazza S."/>
            <person name="Reed J."/>
            <person name="Reid J.F."/>
            <person name="Ring B.Z."/>
            <person name="Ringwald M."/>
            <person name="Rost B."/>
            <person name="Ruan Y."/>
            <person name="Salzberg S.L."/>
            <person name="Sandelin A."/>
            <person name="Schneider C."/>
            <person name="Schoenbach C."/>
            <person name="Sekiguchi K."/>
            <person name="Semple C.A."/>
            <person name="Seno S."/>
            <person name="Sessa L."/>
            <person name="Sheng Y."/>
            <person name="Shibata Y."/>
            <person name="Shimada H."/>
            <person name="Shimada K."/>
            <person name="Silva D."/>
            <person name="Sinclair B."/>
            <person name="Sperling S."/>
            <person name="Stupka E."/>
            <person name="Sugiura K."/>
            <person name="Sultana R."/>
            <person name="Takenaka Y."/>
            <person name="Taki K."/>
            <person name="Tammoja K."/>
            <person name="Tan S.L."/>
            <person name="Tang S."/>
            <person name="Taylor M.S."/>
            <person name="Tegner J."/>
            <person name="Teichmann S.A."/>
            <person name="Ueda H.R."/>
            <person name="van Nimwegen E."/>
            <person name="Verardo R."/>
            <person name="Wei C.L."/>
            <person name="Yagi K."/>
            <person name="Yamanishi H."/>
            <person name="Zabarovsky E."/>
            <person name="Zhu S."/>
            <person name="Zimmer A."/>
            <person name="Hide W."/>
            <person name="Bult C."/>
            <person name="Grimmond S.M."/>
            <person name="Teasdale R.D."/>
            <person name="Liu E.T."/>
            <person name="Brusic V."/>
            <person name="Quackenbush J."/>
            <person name="Wahlestedt C."/>
            <person name="Mattick J.S."/>
            <person name="Hume D.A."/>
            <person name="Kai C."/>
            <person name="Sasaki D."/>
            <person name="Tomaru Y."/>
            <person name="Fukuda S."/>
            <person name="Kanamori-Katayama M."/>
            <person name="Suzuki M."/>
            <person name="Aoki J."/>
            <person name="Arakawa T."/>
            <person name="Iida J."/>
            <person name="Imamura K."/>
            <person name="Itoh M."/>
            <person name="Kato T."/>
            <person name="Kawaji H."/>
            <person name="Kawagashira N."/>
            <person name="Kawashima T."/>
            <person name="Kojima M."/>
            <person name="Kondo S."/>
            <person name="Konno H."/>
            <person name="Nakano K."/>
            <person name="Ninomiya N."/>
            <person name="Nishio T."/>
            <person name="Okada M."/>
            <person name="Plessy C."/>
            <person name="Shibata K."/>
            <person name="Shiraki T."/>
            <person name="Suzuki S."/>
            <person name="Tagami M."/>
            <person name="Waki K."/>
            <person name="Watahiki A."/>
            <person name="Okamura-Oho Y."/>
            <person name="Suzuki H."/>
            <person name="Kawai J."/>
            <person name="Hayashizaki Y."/>
        </authorList>
    </citation>
    <scope>NUCLEOTIDE SEQUENCE [LARGE SCALE MRNA] (ISOFORM 1)</scope>
    <source>
        <strain>C57BL/6J</strain>
        <strain>NOD</strain>
        <tissue>Adrenal gland</tissue>
        <tissue>Spleen</tissue>
        <tissue>Testis</tissue>
    </source>
</reference>
<reference key="2">
    <citation type="journal article" date="2004" name="Genome Res.">
        <title>The status, quality, and expansion of the NIH full-length cDNA project: the Mammalian Gene Collection (MGC).</title>
        <authorList>
            <consortium name="The MGC Project Team"/>
        </authorList>
    </citation>
    <scope>NUCLEOTIDE SEQUENCE [LARGE SCALE MRNA] (ISOFORM 2)</scope>
    <scope>NUCLEOTIDE SEQUENCE [LARGE SCALE MRNA] OF 365-764 (ISOFORM 1)</scope>
    <source>
        <strain>C57BL/6J</strain>
        <tissue>Brain</tissue>
        <tissue>Eye</tissue>
    </source>
</reference>
<reference key="3">
    <citation type="journal article" date="2003" name="DNA Res.">
        <title>Prediction of the coding sequences of mouse homologues of KIAA gene: II. The complete nucleotide sequences of 400 mouse KIAA-homologous cDNAs identified by screening of terminal sequences of cDNA clones randomly sampled from size-fractionated libraries.</title>
        <authorList>
            <person name="Okazaki N."/>
            <person name="Kikuno R."/>
            <person name="Ohara R."/>
            <person name="Inamoto S."/>
            <person name="Aizawa H."/>
            <person name="Yuasa S."/>
            <person name="Nakajima D."/>
            <person name="Nagase T."/>
            <person name="Ohara O."/>
            <person name="Koga H."/>
        </authorList>
    </citation>
    <scope>NUCLEOTIDE SEQUENCE [LARGE SCALE MRNA] OF 69-764 (ISOFORM 1)</scope>
    <source>
        <tissue>Brain</tissue>
    </source>
</reference>
<reference key="4">
    <citation type="journal article" date="2010" name="Cell">
        <title>A tissue-specific atlas of mouse protein phosphorylation and expression.</title>
        <authorList>
            <person name="Huttlin E.L."/>
            <person name="Jedrychowski M.P."/>
            <person name="Elias J.E."/>
            <person name="Goswami T."/>
            <person name="Rad R."/>
            <person name="Beausoleil S.A."/>
            <person name="Villen J."/>
            <person name="Haas W."/>
            <person name="Sowa M.E."/>
            <person name="Gygi S.P."/>
        </authorList>
    </citation>
    <scope>IDENTIFICATION BY MASS SPECTROMETRY [LARGE SCALE ANALYSIS]</scope>
    <source>
        <tissue>Brain</tissue>
        <tissue>Liver</tissue>
        <tissue>Lung</tissue>
        <tissue>Pancreas</tissue>
        <tissue>Spleen</tissue>
        <tissue>Testis</tissue>
    </source>
</reference>